<sequence length="172" mass="19939">MRIYKDIITGDEMFSDTYKVKLVDEVIYEVTGKLVSRTQGDIQIDGFNPSAEEADEGTDSNVETGVDIVLNHRLVETYAFGDKKSYTLYLKDYMKKLVAKLEEKAPDQVDIFKTNMNKVMKDILARFKELQFFTGESMDCDGMVAMMEYRKVDETEIPIMMFFKHGLEEEKF</sequence>
<name>TCTP_LONON</name>
<feature type="chain" id="PRO_0000211285" description="Translationally-controlled tumor protein homolog">
    <location>
        <begin position="1"/>
        <end position="172"/>
    </location>
</feature>
<feature type="domain" description="TCTP" evidence="2">
    <location>
        <begin position="1"/>
        <end position="172"/>
    </location>
</feature>
<reference key="1">
    <citation type="journal article" date="2005" name="Gene">
        <title>A catalog for the transcripts from the venomous structures of the caterpillar Lonomia obliqua: identification of the proteins potentially involved in the coagulation disorder and hemorrhagic syndrome.</title>
        <authorList>
            <person name="Veiga A.B.G."/>
            <person name="Ribeiro J.M.C."/>
            <person name="Guimaraes J.A."/>
            <person name="Francischetti I.M.B."/>
        </authorList>
    </citation>
    <scope>NUCLEOTIDE SEQUENCE [MRNA]</scope>
    <source>
        <tissue>Tegument</tissue>
    </source>
</reference>
<comment type="function">
    <text evidence="1">Involved in calcium binding and microtubule stabilization.</text>
</comment>
<comment type="subcellular location">
    <subcellularLocation>
        <location evidence="1">Cytoplasm</location>
    </subcellularLocation>
</comment>
<comment type="similarity">
    <text evidence="2">Belongs to the TCTP family.</text>
</comment>
<organism>
    <name type="scientific">Lonomia obliqua</name>
    <name type="common">Moth</name>
    <dbReference type="NCBI Taxonomy" id="304329"/>
    <lineage>
        <taxon>Eukaryota</taxon>
        <taxon>Metazoa</taxon>
        <taxon>Ecdysozoa</taxon>
        <taxon>Arthropoda</taxon>
        <taxon>Hexapoda</taxon>
        <taxon>Insecta</taxon>
        <taxon>Pterygota</taxon>
        <taxon>Neoptera</taxon>
        <taxon>Endopterygota</taxon>
        <taxon>Lepidoptera</taxon>
        <taxon>Glossata</taxon>
        <taxon>Ditrysia</taxon>
        <taxon>Bombycoidea</taxon>
        <taxon>Saturniidae</taxon>
        <taxon>Hemileucinae</taxon>
        <taxon>Lonomia</taxon>
    </lineage>
</organism>
<dbReference type="EMBL" id="AY829760">
    <property type="protein sequence ID" value="AAV91374.1"/>
    <property type="molecule type" value="mRNA"/>
</dbReference>
<dbReference type="SMR" id="Q5MGM6"/>
<dbReference type="GO" id="GO:0005737">
    <property type="term" value="C:cytoplasm"/>
    <property type="evidence" value="ECO:0007669"/>
    <property type="project" value="UniProtKB-SubCell"/>
</dbReference>
<dbReference type="GO" id="GO:0005509">
    <property type="term" value="F:calcium ion binding"/>
    <property type="evidence" value="ECO:0007669"/>
    <property type="project" value="TreeGrafter"/>
</dbReference>
<dbReference type="FunFam" id="2.170.150.10:FF:000002">
    <property type="entry name" value="Translationally-controlled tumor protein homolog"/>
    <property type="match status" value="1"/>
</dbReference>
<dbReference type="Gene3D" id="2.170.150.10">
    <property type="entry name" value="Metal Binding Protein, Guanine Nucleotide Exchange Factor, Chain A"/>
    <property type="match status" value="1"/>
</dbReference>
<dbReference type="InterPro" id="IPR011057">
    <property type="entry name" value="Mss4-like_sf"/>
</dbReference>
<dbReference type="InterPro" id="IPR011323">
    <property type="entry name" value="Mss4/transl-control_tumour"/>
</dbReference>
<dbReference type="InterPro" id="IPR034737">
    <property type="entry name" value="TCTP"/>
</dbReference>
<dbReference type="InterPro" id="IPR018103">
    <property type="entry name" value="Translation_control_tumour_CS"/>
</dbReference>
<dbReference type="InterPro" id="IPR018105">
    <property type="entry name" value="Translational_control_tumour_p"/>
</dbReference>
<dbReference type="PANTHER" id="PTHR11991">
    <property type="entry name" value="TRANSLATIONALLY CONTROLLED TUMOR PROTEIN-RELATED"/>
    <property type="match status" value="1"/>
</dbReference>
<dbReference type="PANTHER" id="PTHR11991:SF0">
    <property type="entry name" value="TRANSLATIONALLY-CONTROLLED TUMOR PROTEIN"/>
    <property type="match status" value="1"/>
</dbReference>
<dbReference type="Pfam" id="PF00838">
    <property type="entry name" value="TCTP"/>
    <property type="match status" value="1"/>
</dbReference>
<dbReference type="PRINTS" id="PR01653">
    <property type="entry name" value="TCTPROTEIN"/>
</dbReference>
<dbReference type="SUPFAM" id="SSF51316">
    <property type="entry name" value="Mss4-like"/>
    <property type="match status" value="1"/>
</dbReference>
<dbReference type="PROSITE" id="PS01002">
    <property type="entry name" value="TCTP_1"/>
    <property type="match status" value="1"/>
</dbReference>
<dbReference type="PROSITE" id="PS01003">
    <property type="entry name" value="TCTP_2"/>
    <property type="match status" value="1"/>
</dbReference>
<dbReference type="PROSITE" id="PS51797">
    <property type="entry name" value="TCTP_3"/>
    <property type="match status" value="1"/>
</dbReference>
<protein>
    <recommendedName>
        <fullName>Translationally-controlled tumor protein homolog</fullName>
        <shortName>TCTP</shortName>
    </recommendedName>
</protein>
<gene>
    <name type="primary">Tctp</name>
</gene>
<keyword id="KW-0106">Calcium</keyword>
<keyword id="KW-0963">Cytoplasm</keyword>
<evidence type="ECO:0000250" key="1"/>
<evidence type="ECO:0000255" key="2">
    <source>
        <dbReference type="PROSITE-ProRule" id="PRU01133"/>
    </source>
</evidence>
<proteinExistence type="evidence at transcript level"/>
<accession>Q5MGM6</accession>